<accession>Q5E3V8</accession>
<reference key="1">
    <citation type="journal article" date="2005" name="Proc. Natl. Acad. Sci. U.S.A.">
        <title>Complete genome sequence of Vibrio fischeri: a symbiotic bacterium with pathogenic congeners.</title>
        <authorList>
            <person name="Ruby E.G."/>
            <person name="Urbanowski M."/>
            <person name="Campbell J."/>
            <person name="Dunn A."/>
            <person name="Faini M."/>
            <person name="Gunsalus R."/>
            <person name="Lostroh P."/>
            <person name="Lupp C."/>
            <person name="McCann J."/>
            <person name="Millikan D."/>
            <person name="Schaefer A."/>
            <person name="Stabb E."/>
            <person name="Stevens A."/>
            <person name="Visick K."/>
            <person name="Whistler C."/>
            <person name="Greenberg E.P."/>
        </authorList>
    </citation>
    <scope>NUCLEOTIDE SEQUENCE [LARGE SCALE GENOMIC DNA]</scope>
    <source>
        <strain>ATCC 700601 / ES114</strain>
    </source>
</reference>
<proteinExistence type="inferred from homology"/>
<name>FTHS_ALIF1</name>
<gene>
    <name evidence="1" type="primary">fhs</name>
    <name type="ordered locus">VF_1793</name>
</gene>
<keyword id="KW-0067">ATP-binding</keyword>
<keyword id="KW-0436">Ligase</keyword>
<keyword id="KW-0547">Nucleotide-binding</keyword>
<keyword id="KW-0554">One-carbon metabolism</keyword>
<keyword id="KW-1185">Reference proteome</keyword>
<protein>
    <recommendedName>
        <fullName evidence="1">Formate--tetrahydrofolate ligase</fullName>
        <ecNumber evidence="1">6.3.4.3</ecNumber>
    </recommendedName>
    <alternativeName>
        <fullName evidence="1">Formyltetrahydrofolate synthetase</fullName>
        <shortName evidence="1">FHS</shortName>
        <shortName evidence="1">FTHFS</shortName>
    </alternativeName>
</protein>
<organism>
    <name type="scientific">Aliivibrio fischeri (strain ATCC 700601 / ES114)</name>
    <name type="common">Vibrio fischeri</name>
    <dbReference type="NCBI Taxonomy" id="312309"/>
    <lineage>
        <taxon>Bacteria</taxon>
        <taxon>Pseudomonadati</taxon>
        <taxon>Pseudomonadota</taxon>
        <taxon>Gammaproteobacteria</taxon>
        <taxon>Vibrionales</taxon>
        <taxon>Vibrionaceae</taxon>
        <taxon>Aliivibrio</taxon>
    </lineage>
</organism>
<evidence type="ECO:0000255" key="1">
    <source>
        <dbReference type="HAMAP-Rule" id="MF_01543"/>
    </source>
</evidence>
<feature type="chain" id="PRO_0000199408" description="Formate--tetrahydrofolate ligase">
    <location>
        <begin position="1"/>
        <end position="582"/>
    </location>
</feature>
<feature type="binding site" evidence="1">
    <location>
        <begin position="65"/>
        <end position="72"/>
    </location>
    <ligand>
        <name>ATP</name>
        <dbReference type="ChEBI" id="CHEBI:30616"/>
    </ligand>
</feature>
<sequence>MKSDIEICQTATLTRMKTIASNLGLHDDDITPQGPFKAKVNIDALKRLKSEPNGKLILVSAITPTPLGEGKTVTTIGLAQGLAKLGESVSACIRQPSMGPVFGVKGGAAGGGYSQVAPMEELNLHLTGDIHAITAAHNLASAAIDARIYHEQRLGYDVFSEKNELPALRIDPQHVVWKRVMDHNDRALRMVTIGKNEDGKTINGYEREDGFDITAASELMAILALATDLQDLRQRIGRIVVAYNLDGEPVTTEDLQVAGAMTVTMKFAINPTLMQTLEGVPTFVHSGPFANIAHGNSSIIADNIALKLTDYTVTEGGFGSDMGFEKACNIKAPLSEKSPDCAVLVATLRGIKANSGLFPLSPGQSLPKELFAPNKEALDAGLDNLLWHINNCAKYGLPVVVAINRFPEDTQEELDSLLNWVSNLDMNVDVAISEAFVKGGNGTLELAEKVIKACQQETQFTPLYTSEMSLFDKLNAVAIKGYGAERIELSEKAQQQLATFEKLGYQSLSVCMAKTPASISTDGNIKGAPTDFIVPIRELKLCAGAGFIYALCGNVMTMPGLPEKPAFMNLDIDGDGNIVGLS</sequence>
<comment type="catalytic activity">
    <reaction evidence="1">
        <text>(6S)-5,6,7,8-tetrahydrofolate + formate + ATP = (6R)-10-formyltetrahydrofolate + ADP + phosphate</text>
        <dbReference type="Rhea" id="RHEA:20221"/>
        <dbReference type="ChEBI" id="CHEBI:15740"/>
        <dbReference type="ChEBI" id="CHEBI:30616"/>
        <dbReference type="ChEBI" id="CHEBI:43474"/>
        <dbReference type="ChEBI" id="CHEBI:57453"/>
        <dbReference type="ChEBI" id="CHEBI:195366"/>
        <dbReference type="ChEBI" id="CHEBI:456216"/>
        <dbReference type="EC" id="6.3.4.3"/>
    </reaction>
</comment>
<comment type="pathway">
    <text evidence="1">One-carbon metabolism; tetrahydrofolate interconversion.</text>
</comment>
<comment type="similarity">
    <text evidence="1">Belongs to the formate--tetrahydrofolate ligase family.</text>
</comment>
<dbReference type="EC" id="6.3.4.3" evidence="1"/>
<dbReference type="EMBL" id="CP000020">
    <property type="protein sequence ID" value="AAW86288.1"/>
    <property type="molecule type" value="Genomic_DNA"/>
</dbReference>
<dbReference type="RefSeq" id="WP_011262325.1">
    <property type="nucleotide sequence ID" value="NC_006840.2"/>
</dbReference>
<dbReference type="RefSeq" id="YP_205176.1">
    <property type="nucleotide sequence ID" value="NC_006840.2"/>
</dbReference>
<dbReference type="SMR" id="Q5E3V8"/>
<dbReference type="STRING" id="312309.VF_1793"/>
<dbReference type="EnsemblBacteria" id="AAW86288">
    <property type="protein sequence ID" value="AAW86288"/>
    <property type="gene ID" value="VF_1793"/>
</dbReference>
<dbReference type="GeneID" id="54164494"/>
<dbReference type="KEGG" id="vfi:VF_1793"/>
<dbReference type="PATRIC" id="fig|312309.11.peg.1820"/>
<dbReference type="eggNOG" id="COG2759">
    <property type="taxonomic scope" value="Bacteria"/>
</dbReference>
<dbReference type="HOGENOM" id="CLU_003601_3_3_6"/>
<dbReference type="OrthoDB" id="9761733at2"/>
<dbReference type="UniPathway" id="UPA00193"/>
<dbReference type="Proteomes" id="UP000000537">
    <property type="component" value="Chromosome I"/>
</dbReference>
<dbReference type="GO" id="GO:0005524">
    <property type="term" value="F:ATP binding"/>
    <property type="evidence" value="ECO:0007669"/>
    <property type="project" value="UniProtKB-UniRule"/>
</dbReference>
<dbReference type="GO" id="GO:0004329">
    <property type="term" value="F:formate-tetrahydrofolate ligase activity"/>
    <property type="evidence" value="ECO:0007669"/>
    <property type="project" value="UniProtKB-UniRule"/>
</dbReference>
<dbReference type="GO" id="GO:0035999">
    <property type="term" value="P:tetrahydrofolate interconversion"/>
    <property type="evidence" value="ECO:0007669"/>
    <property type="project" value="UniProtKB-UniRule"/>
</dbReference>
<dbReference type="CDD" id="cd00477">
    <property type="entry name" value="FTHFS"/>
    <property type="match status" value="1"/>
</dbReference>
<dbReference type="FunFam" id="3.30.1510.10:FF:000001">
    <property type="entry name" value="Formate--tetrahydrofolate ligase"/>
    <property type="match status" value="1"/>
</dbReference>
<dbReference type="FunFam" id="3.10.410.10:FF:000001">
    <property type="entry name" value="Putative formate--tetrahydrofolate ligase"/>
    <property type="match status" value="1"/>
</dbReference>
<dbReference type="Gene3D" id="3.30.1510.10">
    <property type="entry name" value="Domain 2, N(10)-formyltetrahydrofolate synthetase"/>
    <property type="match status" value="1"/>
</dbReference>
<dbReference type="Gene3D" id="3.10.410.10">
    <property type="entry name" value="Formyltetrahydrofolate synthetase, domain 3"/>
    <property type="match status" value="1"/>
</dbReference>
<dbReference type="Gene3D" id="3.40.50.300">
    <property type="entry name" value="P-loop containing nucleotide triphosphate hydrolases"/>
    <property type="match status" value="1"/>
</dbReference>
<dbReference type="HAMAP" id="MF_01543">
    <property type="entry name" value="FTHFS"/>
    <property type="match status" value="1"/>
</dbReference>
<dbReference type="InterPro" id="IPR000559">
    <property type="entry name" value="Formate_THF_ligase"/>
</dbReference>
<dbReference type="InterPro" id="IPR020628">
    <property type="entry name" value="Formate_THF_ligase_CS"/>
</dbReference>
<dbReference type="InterPro" id="IPR027417">
    <property type="entry name" value="P-loop_NTPase"/>
</dbReference>
<dbReference type="NCBIfam" id="NF010030">
    <property type="entry name" value="PRK13505.1"/>
    <property type="match status" value="1"/>
</dbReference>
<dbReference type="NCBIfam" id="NF010031">
    <property type="entry name" value="PRK13506.1"/>
    <property type="match status" value="1"/>
</dbReference>
<dbReference type="Pfam" id="PF01268">
    <property type="entry name" value="FTHFS"/>
    <property type="match status" value="1"/>
</dbReference>
<dbReference type="SUPFAM" id="SSF52540">
    <property type="entry name" value="P-loop containing nucleoside triphosphate hydrolases"/>
    <property type="match status" value="1"/>
</dbReference>
<dbReference type="PROSITE" id="PS00721">
    <property type="entry name" value="FTHFS_1"/>
    <property type="match status" value="1"/>
</dbReference>
<dbReference type="PROSITE" id="PS00722">
    <property type="entry name" value="FTHFS_2"/>
    <property type="match status" value="1"/>
</dbReference>